<proteinExistence type="inferred from homology"/>
<protein>
    <recommendedName>
        <fullName evidence="1">Chaperone protein HtpG</fullName>
    </recommendedName>
    <alternativeName>
        <fullName evidence="1">Heat shock protein HtpG</fullName>
    </alternativeName>
    <alternativeName>
        <fullName evidence="1">High temperature protein G</fullName>
    </alternativeName>
</protein>
<reference key="1">
    <citation type="journal article" date="2002" name="Nucleic Acids Res.">
        <title>Genome sequence of Shigella flexneri 2a: insights into pathogenicity through comparison with genomes of Escherichia coli K12 and O157.</title>
        <authorList>
            <person name="Jin Q."/>
            <person name="Yuan Z."/>
            <person name="Xu J."/>
            <person name="Wang Y."/>
            <person name="Shen Y."/>
            <person name="Lu W."/>
            <person name="Wang J."/>
            <person name="Liu H."/>
            <person name="Yang J."/>
            <person name="Yang F."/>
            <person name="Zhang X."/>
            <person name="Zhang J."/>
            <person name="Yang G."/>
            <person name="Wu H."/>
            <person name="Qu D."/>
            <person name="Dong J."/>
            <person name="Sun L."/>
            <person name="Xue Y."/>
            <person name="Zhao A."/>
            <person name="Gao Y."/>
            <person name="Zhu J."/>
            <person name="Kan B."/>
            <person name="Ding K."/>
            <person name="Chen S."/>
            <person name="Cheng H."/>
            <person name="Yao Z."/>
            <person name="He B."/>
            <person name="Chen R."/>
            <person name="Ma D."/>
            <person name="Qiang B."/>
            <person name="Wen Y."/>
            <person name="Hou Y."/>
            <person name="Yu J."/>
        </authorList>
    </citation>
    <scope>NUCLEOTIDE SEQUENCE [LARGE SCALE GENOMIC DNA]</scope>
    <source>
        <strain>301 / Serotype 2a</strain>
    </source>
</reference>
<reference key="2">
    <citation type="journal article" date="2003" name="Infect. Immun.">
        <title>Complete genome sequence and comparative genomics of Shigella flexneri serotype 2a strain 2457T.</title>
        <authorList>
            <person name="Wei J."/>
            <person name="Goldberg M.B."/>
            <person name="Burland V."/>
            <person name="Venkatesan M.M."/>
            <person name="Deng W."/>
            <person name="Fournier G."/>
            <person name="Mayhew G.F."/>
            <person name="Plunkett G. III"/>
            <person name="Rose D.J."/>
            <person name="Darling A."/>
            <person name="Mau B."/>
            <person name="Perna N.T."/>
            <person name="Payne S.M."/>
            <person name="Runyen-Janecky L.J."/>
            <person name="Zhou S."/>
            <person name="Schwartz D.C."/>
            <person name="Blattner F.R."/>
        </authorList>
    </citation>
    <scope>NUCLEOTIDE SEQUENCE [LARGE SCALE GENOMIC DNA]</scope>
    <source>
        <strain>ATCC 700930 / 2457T / Serotype 2a</strain>
    </source>
</reference>
<sequence>MKGQETRGFQSEVKQLLHLMIHSLYSNKEIFLRELISNASDAADKLRFRALSNPDLYEGDGELRVRVSFDKDKRTLTISDNGVGMTRDEVIDHLGTIAKSGTKSFLESLGSDQAKDSQLIGQFGVGFYSAFIVADKVTVRTRAAGEKPENGVFWESAGEGEYTVADITKEDRGTEITLHLREGEDEFLDDWRVRSIISKYSDHIALPVEIEKREEKDGETVISWAKINKAQALWTRNKSEITDEEYKEFYKHIAHDFNDPLTWSHNRVEGKQEYTSLLYIPSQAPWDMWNRDHKHGLKLYVQRVFIMDDAEQFMPNYLRFVRGLIDSSDLPLNVSREILQDSTVTRNLRNALTKRVLQMLEKLAKDDAEKYQTFWQQFGLVLKEGPAEDFANQEAIAKLLRFASTYTDSSAQTVSLEDYVSRMKEGQEKIYYITADSYAAAKSSPHLELLRKKGIEVLLLSDRIDEWMMNYLTEFDGKPFQSVSKVDESLEKLADEVDESAKEAEKALTPFIDRVKALLGERVKDVRLTHRLTDTPAIVSTDADEMSTQMAKLFAAAGQKVPEVKYIFELNPDHVLVKRAADTEDEAKFSEWVELLLDQALLAERGTLEDPNLFIRRMNQLLVS</sequence>
<dbReference type="EMBL" id="AE005674">
    <property type="protein sequence ID" value="AAN42073.1"/>
    <property type="molecule type" value="Genomic_DNA"/>
</dbReference>
<dbReference type="EMBL" id="AE014073">
    <property type="protein sequence ID" value="AAP15950.1"/>
    <property type="molecule type" value="Genomic_DNA"/>
</dbReference>
<dbReference type="RefSeq" id="NP_706366.1">
    <property type="nucleotide sequence ID" value="NC_004337.2"/>
</dbReference>
<dbReference type="RefSeq" id="WP_000678191.1">
    <property type="nucleotide sequence ID" value="NZ_WPGW01000015.1"/>
</dbReference>
<dbReference type="SMR" id="Q83SE6"/>
<dbReference type="STRING" id="198214.SF0418"/>
<dbReference type="PaxDb" id="198214-SF0418"/>
<dbReference type="GeneID" id="1027713"/>
<dbReference type="KEGG" id="sfl:SF0418"/>
<dbReference type="KEGG" id="sfx:S0425"/>
<dbReference type="PATRIC" id="fig|198214.7.peg.480"/>
<dbReference type="HOGENOM" id="CLU_006684_3_0_6"/>
<dbReference type="Proteomes" id="UP000001006">
    <property type="component" value="Chromosome"/>
</dbReference>
<dbReference type="Proteomes" id="UP000002673">
    <property type="component" value="Chromosome"/>
</dbReference>
<dbReference type="GO" id="GO:0005737">
    <property type="term" value="C:cytoplasm"/>
    <property type="evidence" value="ECO:0007669"/>
    <property type="project" value="UniProtKB-SubCell"/>
</dbReference>
<dbReference type="GO" id="GO:0005524">
    <property type="term" value="F:ATP binding"/>
    <property type="evidence" value="ECO:0007669"/>
    <property type="project" value="UniProtKB-UniRule"/>
</dbReference>
<dbReference type="GO" id="GO:0016887">
    <property type="term" value="F:ATP hydrolysis activity"/>
    <property type="evidence" value="ECO:0007669"/>
    <property type="project" value="InterPro"/>
</dbReference>
<dbReference type="GO" id="GO:0140662">
    <property type="term" value="F:ATP-dependent protein folding chaperone"/>
    <property type="evidence" value="ECO:0007669"/>
    <property type="project" value="InterPro"/>
</dbReference>
<dbReference type="GO" id="GO:0051082">
    <property type="term" value="F:unfolded protein binding"/>
    <property type="evidence" value="ECO:0007669"/>
    <property type="project" value="UniProtKB-UniRule"/>
</dbReference>
<dbReference type="CDD" id="cd16927">
    <property type="entry name" value="HATPase_Hsp90-like"/>
    <property type="match status" value="1"/>
</dbReference>
<dbReference type="FunFam" id="1.20.120.790:FF:000002">
    <property type="entry name" value="Molecular chaperone HtpG"/>
    <property type="match status" value="1"/>
</dbReference>
<dbReference type="FunFam" id="3.30.230.80:FF:000002">
    <property type="entry name" value="Molecular chaperone HtpG"/>
    <property type="match status" value="1"/>
</dbReference>
<dbReference type="FunFam" id="3.30.565.10:FF:000009">
    <property type="entry name" value="Molecular chaperone HtpG"/>
    <property type="match status" value="1"/>
</dbReference>
<dbReference type="FunFam" id="3.40.50.11260:FF:000002">
    <property type="entry name" value="Molecular chaperone HtpG"/>
    <property type="match status" value="1"/>
</dbReference>
<dbReference type="Gene3D" id="3.30.230.80">
    <property type="match status" value="1"/>
</dbReference>
<dbReference type="Gene3D" id="3.40.50.11260">
    <property type="match status" value="1"/>
</dbReference>
<dbReference type="Gene3D" id="1.20.120.790">
    <property type="entry name" value="Heat shock protein 90, C-terminal domain"/>
    <property type="match status" value="1"/>
</dbReference>
<dbReference type="Gene3D" id="3.30.565.10">
    <property type="entry name" value="Histidine kinase-like ATPase, C-terminal domain"/>
    <property type="match status" value="1"/>
</dbReference>
<dbReference type="HAMAP" id="MF_00505">
    <property type="entry name" value="HSP90"/>
    <property type="match status" value="1"/>
</dbReference>
<dbReference type="InterPro" id="IPR036890">
    <property type="entry name" value="HATPase_C_sf"/>
</dbReference>
<dbReference type="InterPro" id="IPR019805">
    <property type="entry name" value="Heat_shock_protein_90_CS"/>
</dbReference>
<dbReference type="InterPro" id="IPR037196">
    <property type="entry name" value="HSP90_C"/>
</dbReference>
<dbReference type="InterPro" id="IPR001404">
    <property type="entry name" value="Hsp90_fam"/>
</dbReference>
<dbReference type="InterPro" id="IPR020575">
    <property type="entry name" value="Hsp90_N"/>
</dbReference>
<dbReference type="InterPro" id="IPR020568">
    <property type="entry name" value="Ribosomal_Su5_D2-typ_SF"/>
</dbReference>
<dbReference type="NCBIfam" id="NF003555">
    <property type="entry name" value="PRK05218.1"/>
    <property type="match status" value="1"/>
</dbReference>
<dbReference type="PANTHER" id="PTHR11528">
    <property type="entry name" value="HEAT SHOCK PROTEIN 90 FAMILY MEMBER"/>
    <property type="match status" value="1"/>
</dbReference>
<dbReference type="Pfam" id="PF13589">
    <property type="entry name" value="HATPase_c_3"/>
    <property type="match status" value="1"/>
</dbReference>
<dbReference type="Pfam" id="PF00183">
    <property type="entry name" value="HSP90"/>
    <property type="match status" value="1"/>
</dbReference>
<dbReference type="PIRSF" id="PIRSF002583">
    <property type="entry name" value="Hsp90"/>
    <property type="match status" value="1"/>
</dbReference>
<dbReference type="PRINTS" id="PR00775">
    <property type="entry name" value="HEATSHOCK90"/>
</dbReference>
<dbReference type="SMART" id="SM00387">
    <property type="entry name" value="HATPase_c"/>
    <property type="match status" value="1"/>
</dbReference>
<dbReference type="SUPFAM" id="SSF55874">
    <property type="entry name" value="ATPase domain of HSP90 chaperone/DNA topoisomerase II/histidine kinase"/>
    <property type="match status" value="1"/>
</dbReference>
<dbReference type="SUPFAM" id="SSF110942">
    <property type="entry name" value="HSP90 C-terminal domain"/>
    <property type="match status" value="1"/>
</dbReference>
<dbReference type="SUPFAM" id="SSF54211">
    <property type="entry name" value="Ribosomal protein S5 domain 2-like"/>
    <property type="match status" value="1"/>
</dbReference>
<dbReference type="PROSITE" id="PS00298">
    <property type="entry name" value="HSP90"/>
    <property type="match status" value="1"/>
</dbReference>
<accession>Q83SE6</accession>
<gene>
    <name evidence="1" type="primary">htpG</name>
    <name type="ordered locus">SF0418</name>
    <name type="ordered locus">S0425</name>
</gene>
<evidence type="ECO:0000255" key="1">
    <source>
        <dbReference type="HAMAP-Rule" id="MF_00505"/>
    </source>
</evidence>
<organism>
    <name type="scientific">Shigella flexneri</name>
    <dbReference type="NCBI Taxonomy" id="623"/>
    <lineage>
        <taxon>Bacteria</taxon>
        <taxon>Pseudomonadati</taxon>
        <taxon>Pseudomonadota</taxon>
        <taxon>Gammaproteobacteria</taxon>
        <taxon>Enterobacterales</taxon>
        <taxon>Enterobacteriaceae</taxon>
        <taxon>Shigella</taxon>
    </lineage>
</organism>
<name>HTPG_SHIFL</name>
<comment type="function">
    <text evidence="1">Molecular chaperone. Has ATPase activity.</text>
</comment>
<comment type="subunit">
    <text evidence="1">Homodimer.</text>
</comment>
<comment type="subcellular location">
    <subcellularLocation>
        <location evidence="1">Cytoplasm</location>
    </subcellularLocation>
</comment>
<comment type="similarity">
    <text evidence="1">Belongs to the heat shock protein 90 family.</text>
</comment>
<keyword id="KW-0067">ATP-binding</keyword>
<keyword id="KW-0143">Chaperone</keyword>
<keyword id="KW-0963">Cytoplasm</keyword>
<keyword id="KW-0547">Nucleotide-binding</keyword>
<keyword id="KW-1185">Reference proteome</keyword>
<keyword id="KW-0346">Stress response</keyword>
<feature type="chain" id="PRO_0000063015" description="Chaperone protein HtpG">
    <location>
        <begin position="1"/>
        <end position="624"/>
    </location>
</feature>
<feature type="region of interest" description="A; substrate-binding" evidence="1">
    <location>
        <begin position="1"/>
        <end position="336"/>
    </location>
</feature>
<feature type="region of interest" description="B" evidence="1">
    <location>
        <begin position="337"/>
        <end position="552"/>
    </location>
</feature>
<feature type="region of interest" description="C" evidence="1">
    <location>
        <begin position="553"/>
        <end position="624"/>
    </location>
</feature>